<protein>
    <recommendedName>
        <fullName evidence="1">Peptide methionine sulfoxide reductase MsrA</fullName>
        <shortName evidence="1">Protein-methionine-S-oxide reductase</shortName>
        <ecNumber evidence="1">1.8.4.11</ecNumber>
    </recommendedName>
    <alternativeName>
        <fullName evidence="1">Peptide-methionine (S)-S-oxide reductase</fullName>
        <shortName evidence="1">Peptide Met(O) reductase</shortName>
    </alternativeName>
</protein>
<evidence type="ECO:0000255" key="1">
    <source>
        <dbReference type="HAMAP-Rule" id="MF_01401"/>
    </source>
</evidence>
<reference key="1">
    <citation type="journal article" date="2006" name="Genome Biol.">
        <title>Genomic analysis reveals that Pseudomonas aeruginosa virulence is combinatorial.</title>
        <authorList>
            <person name="Lee D.G."/>
            <person name="Urbach J.M."/>
            <person name="Wu G."/>
            <person name="Liberati N.T."/>
            <person name="Feinbaum R.L."/>
            <person name="Miyata S."/>
            <person name="Diggins L.T."/>
            <person name="He J."/>
            <person name="Saucier M."/>
            <person name="Deziel E."/>
            <person name="Friedman L."/>
            <person name="Li L."/>
            <person name="Grills G."/>
            <person name="Montgomery K."/>
            <person name="Kucherlapati R."/>
            <person name="Rahme L.G."/>
            <person name="Ausubel F.M."/>
        </authorList>
    </citation>
    <scope>NUCLEOTIDE SEQUENCE [LARGE SCALE GENOMIC DNA]</scope>
    <source>
        <strain>UCBPP-PA14</strain>
    </source>
</reference>
<name>MSRA_PSEAB</name>
<organism>
    <name type="scientific">Pseudomonas aeruginosa (strain UCBPP-PA14)</name>
    <dbReference type="NCBI Taxonomy" id="208963"/>
    <lineage>
        <taxon>Bacteria</taxon>
        <taxon>Pseudomonadati</taxon>
        <taxon>Pseudomonadota</taxon>
        <taxon>Gammaproteobacteria</taxon>
        <taxon>Pseudomonadales</taxon>
        <taxon>Pseudomonadaceae</taxon>
        <taxon>Pseudomonas</taxon>
    </lineage>
</organism>
<accession>Q02EZ9</accession>
<sequence length="215" mass="23545">MVLRSEILTKKSELPTPDQALPGRESAMPVPEAHFVNGRPLTAPFPAGLQQVLFGMGCFWGAERRLWQQPGVWVTAVGYAGGYTPNPTYDEVCSGLTGHSEVVLVVYNPQETSFEQLLKVFWEAHDPTQGMRQGGDIGTQYRSVIYTFDAAQKAAAMASRENFQAELAKAGYDRITTEIADVPPFYYAEAYHQQYLAKNPNGYCGLGGTGVCLPA</sequence>
<dbReference type="EC" id="1.8.4.11" evidence="1"/>
<dbReference type="EMBL" id="CP000438">
    <property type="protein sequence ID" value="ABJ14402.1"/>
    <property type="molecule type" value="Genomic_DNA"/>
</dbReference>
<dbReference type="RefSeq" id="WP_003141761.1">
    <property type="nucleotide sequence ID" value="NZ_CP034244.1"/>
</dbReference>
<dbReference type="SMR" id="Q02EZ9"/>
<dbReference type="KEGG" id="pau:PA14_66330"/>
<dbReference type="PseudoCAP" id="PA14_66330"/>
<dbReference type="HOGENOM" id="CLU_031040_10_3_6"/>
<dbReference type="BioCyc" id="PAER208963:G1G74-5597-MONOMER"/>
<dbReference type="Proteomes" id="UP000000653">
    <property type="component" value="Chromosome"/>
</dbReference>
<dbReference type="GO" id="GO:0005737">
    <property type="term" value="C:cytoplasm"/>
    <property type="evidence" value="ECO:0007669"/>
    <property type="project" value="TreeGrafter"/>
</dbReference>
<dbReference type="GO" id="GO:0036456">
    <property type="term" value="F:L-methionine-(S)-S-oxide reductase activity"/>
    <property type="evidence" value="ECO:0007669"/>
    <property type="project" value="TreeGrafter"/>
</dbReference>
<dbReference type="GO" id="GO:0008113">
    <property type="term" value="F:peptide-methionine (S)-S-oxide reductase activity"/>
    <property type="evidence" value="ECO:0007669"/>
    <property type="project" value="UniProtKB-UniRule"/>
</dbReference>
<dbReference type="GO" id="GO:0034599">
    <property type="term" value="P:cellular response to oxidative stress"/>
    <property type="evidence" value="ECO:0007669"/>
    <property type="project" value="TreeGrafter"/>
</dbReference>
<dbReference type="GO" id="GO:0036211">
    <property type="term" value="P:protein modification process"/>
    <property type="evidence" value="ECO:0007669"/>
    <property type="project" value="UniProtKB-UniRule"/>
</dbReference>
<dbReference type="FunFam" id="3.30.1060.10:FF:000001">
    <property type="entry name" value="Peptide methionine sulfoxide reductase MsrA"/>
    <property type="match status" value="1"/>
</dbReference>
<dbReference type="Gene3D" id="3.30.1060.10">
    <property type="entry name" value="Peptide methionine sulphoxide reductase MsrA"/>
    <property type="match status" value="1"/>
</dbReference>
<dbReference type="HAMAP" id="MF_01401">
    <property type="entry name" value="MsrA"/>
    <property type="match status" value="1"/>
</dbReference>
<dbReference type="InterPro" id="IPR002569">
    <property type="entry name" value="Met_Sox_Rdtase_MsrA_dom"/>
</dbReference>
<dbReference type="InterPro" id="IPR036509">
    <property type="entry name" value="Met_Sox_Rdtase_MsrA_sf"/>
</dbReference>
<dbReference type="InterPro" id="IPR050162">
    <property type="entry name" value="MsrA_MetSO_reductase"/>
</dbReference>
<dbReference type="NCBIfam" id="TIGR00401">
    <property type="entry name" value="msrA"/>
    <property type="match status" value="1"/>
</dbReference>
<dbReference type="PANTHER" id="PTHR42799">
    <property type="entry name" value="MITOCHONDRIAL PEPTIDE METHIONINE SULFOXIDE REDUCTASE"/>
    <property type="match status" value="1"/>
</dbReference>
<dbReference type="PANTHER" id="PTHR42799:SF2">
    <property type="entry name" value="MITOCHONDRIAL PEPTIDE METHIONINE SULFOXIDE REDUCTASE"/>
    <property type="match status" value="1"/>
</dbReference>
<dbReference type="Pfam" id="PF01625">
    <property type="entry name" value="PMSR"/>
    <property type="match status" value="1"/>
</dbReference>
<dbReference type="SUPFAM" id="SSF55068">
    <property type="entry name" value="Peptide methionine sulfoxide reductase"/>
    <property type="match status" value="1"/>
</dbReference>
<proteinExistence type="inferred from homology"/>
<gene>
    <name evidence="1" type="primary">msrA</name>
    <name type="ordered locus">PA14_66330</name>
</gene>
<comment type="function">
    <text evidence="1">Has an important function as a repair enzyme for proteins that have been inactivated by oxidation. Catalyzes the reversible oxidation-reduction of methionine sulfoxide in proteins to methionine.</text>
</comment>
<comment type="catalytic activity">
    <reaction evidence="1">
        <text>L-methionyl-[protein] + [thioredoxin]-disulfide + H2O = L-methionyl-(S)-S-oxide-[protein] + [thioredoxin]-dithiol</text>
        <dbReference type="Rhea" id="RHEA:14217"/>
        <dbReference type="Rhea" id="RHEA-COMP:10698"/>
        <dbReference type="Rhea" id="RHEA-COMP:10700"/>
        <dbReference type="Rhea" id="RHEA-COMP:12313"/>
        <dbReference type="Rhea" id="RHEA-COMP:12315"/>
        <dbReference type="ChEBI" id="CHEBI:15377"/>
        <dbReference type="ChEBI" id="CHEBI:16044"/>
        <dbReference type="ChEBI" id="CHEBI:29950"/>
        <dbReference type="ChEBI" id="CHEBI:44120"/>
        <dbReference type="ChEBI" id="CHEBI:50058"/>
        <dbReference type="EC" id="1.8.4.11"/>
    </reaction>
</comment>
<comment type="catalytic activity">
    <reaction evidence="1">
        <text>[thioredoxin]-disulfide + L-methionine + H2O = L-methionine (S)-S-oxide + [thioredoxin]-dithiol</text>
        <dbReference type="Rhea" id="RHEA:19993"/>
        <dbReference type="Rhea" id="RHEA-COMP:10698"/>
        <dbReference type="Rhea" id="RHEA-COMP:10700"/>
        <dbReference type="ChEBI" id="CHEBI:15377"/>
        <dbReference type="ChEBI" id="CHEBI:29950"/>
        <dbReference type="ChEBI" id="CHEBI:50058"/>
        <dbReference type="ChEBI" id="CHEBI:57844"/>
        <dbReference type="ChEBI" id="CHEBI:58772"/>
        <dbReference type="EC" id="1.8.4.11"/>
    </reaction>
</comment>
<comment type="similarity">
    <text evidence="1">Belongs to the MsrA Met sulfoxide reductase family.</text>
</comment>
<keyword id="KW-0560">Oxidoreductase</keyword>
<feature type="chain" id="PRO_1000068350" description="Peptide methionine sulfoxide reductase MsrA">
    <location>
        <begin position="1"/>
        <end position="215"/>
    </location>
</feature>
<feature type="active site" evidence="1">
    <location>
        <position position="58"/>
    </location>
</feature>